<keyword id="KW-0963">Cytoplasm</keyword>
<keyword id="KW-0349">Heme</keyword>
<keyword id="KW-0408">Iron</keyword>
<keyword id="KW-0479">Metal-binding</keyword>
<keyword id="KW-0514">Muscle protein</keyword>
<keyword id="KW-0560">Oxidoreductase</keyword>
<keyword id="KW-0561">Oxygen transport</keyword>
<keyword id="KW-0813">Transport</keyword>
<accession>Q9DGJ0</accession>
<proteinExistence type="evidence at transcript level"/>
<dbReference type="EC" id="1.7.-.-" evidence="2"/>
<dbReference type="EC" id="1.11.1.-" evidence="2"/>
<dbReference type="EMBL" id="AF291834">
    <property type="protein sequence ID" value="AAG02108.1"/>
    <property type="molecule type" value="mRNA"/>
</dbReference>
<dbReference type="SMR" id="Q9DGJ0"/>
<dbReference type="GO" id="GO:0070062">
    <property type="term" value="C:extracellular exosome"/>
    <property type="evidence" value="ECO:0007669"/>
    <property type="project" value="TreeGrafter"/>
</dbReference>
<dbReference type="GO" id="GO:0016528">
    <property type="term" value="C:sarcoplasm"/>
    <property type="evidence" value="ECO:0000250"/>
    <property type="project" value="UniProtKB"/>
</dbReference>
<dbReference type="GO" id="GO:0020037">
    <property type="term" value="F:heme binding"/>
    <property type="evidence" value="ECO:0007669"/>
    <property type="project" value="InterPro"/>
</dbReference>
<dbReference type="GO" id="GO:0046872">
    <property type="term" value="F:metal ion binding"/>
    <property type="evidence" value="ECO:0007669"/>
    <property type="project" value="UniProtKB-KW"/>
</dbReference>
<dbReference type="GO" id="GO:0098809">
    <property type="term" value="F:nitrite reductase activity"/>
    <property type="evidence" value="ECO:0000250"/>
    <property type="project" value="UniProtKB"/>
</dbReference>
<dbReference type="GO" id="GO:0019825">
    <property type="term" value="F:oxygen binding"/>
    <property type="evidence" value="ECO:0007669"/>
    <property type="project" value="InterPro"/>
</dbReference>
<dbReference type="GO" id="GO:0005344">
    <property type="term" value="F:oxygen carrier activity"/>
    <property type="evidence" value="ECO:0000250"/>
    <property type="project" value="UniProtKB"/>
</dbReference>
<dbReference type="GO" id="GO:0004601">
    <property type="term" value="F:peroxidase activity"/>
    <property type="evidence" value="ECO:0000250"/>
    <property type="project" value="UniProtKB"/>
</dbReference>
<dbReference type="GO" id="GO:0019430">
    <property type="term" value="P:removal of superoxide radicals"/>
    <property type="evidence" value="ECO:0000250"/>
    <property type="project" value="UniProtKB"/>
</dbReference>
<dbReference type="Gene3D" id="6.10.140.2100">
    <property type="match status" value="1"/>
</dbReference>
<dbReference type="Gene3D" id="6.10.140.2110">
    <property type="match status" value="1"/>
</dbReference>
<dbReference type="InterPro" id="IPR000971">
    <property type="entry name" value="Globin"/>
</dbReference>
<dbReference type="InterPro" id="IPR009050">
    <property type="entry name" value="Globin-like_sf"/>
</dbReference>
<dbReference type="InterPro" id="IPR002335">
    <property type="entry name" value="Myoglobin"/>
</dbReference>
<dbReference type="PANTHER" id="PTHR47132">
    <property type="entry name" value="MYOGLOBIN"/>
    <property type="match status" value="1"/>
</dbReference>
<dbReference type="PANTHER" id="PTHR47132:SF1">
    <property type="entry name" value="MYOGLOBIN"/>
    <property type="match status" value="1"/>
</dbReference>
<dbReference type="Pfam" id="PF00042">
    <property type="entry name" value="Globin"/>
    <property type="match status" value="1"/>
</dbReference>
<dbReference type="PRINTS" id="PR00613">
    <property type="entry name" value="MYOGLOBIN"/>
</dbReference>
<dbReference type="SUPFAM" id="SSF46458">
    <property type="entry name" value="Globin-like"/>
    <property type="match status" value="1"/>
</dbReference>
<dbReference type="PROSITE" id="PS01033">
    <property type="entry name" value="GLOBIN"/>
    <property type="match status" value="1"/>
</dbReference>
<protein>
    <recommendedName>
        <fullName>Myoglobin</fullName>
    </recommendedName>
    <alternativeName>
        <fullName evidence="2">Nitrite reductase MB</fullName>
        <ecNumber evidence="2">1.7.-.-</ecNumber>
    </alternativeName>
    <alternativeName>
        <fullName evidence="2">Pseudoperoxidase MB</fullName>
        <ecNumber evidence="2">1.11.1.-</ecNumber>
    </alternativeName>
</protein>
<evidence type="ECO:0000250" key="1"/>
<evidence type="ECO:0000250" key="2">
    <source>
        <dbReference type="UniProtKB" id="P02144"/>
    </source>
</evidence>
<evidence type="ECO:0000250" key="3">
    <source>
        <dbReference type="UniProtKB" id="P02185"/>
    </source>
</evidence>
<evidence type="ECO:0000250" key="4">
    <source>
        <dbReference type="UniProtKB" id="P02189"/>
    </source>
</evidence>
<evidence type="ECO:0000250" key="5">
    <source>
        <dbReference type="UniProtKB" id="P68082"/>
    </source>
</evidence>
<evidence type="ECO:0000255" key="6">
    <source>
        <dbReference type="PROSITE-ProRule" id="PRU00238"/>
    </source>
</evidence>
<comment type="function">
    <text evidence="2">Monomeric heme protein which primary function is to store oxygen and facilitate its diffusion within muscle tissues. Reversibly binds oxygen through a pentacoordinated heme iron and enables its timely and efficient release as needed during periods of heightened demand. Depending on the oxidative conditions of tissues and cells, and in addition to its ability to bind oxygen, it also has a nitrite reductase activity whereby it regulates the production of bioactive nitric oxide. Under stress conditions, like hypoxia and anoxia, it also protects cells against reactive oxygen species thanks to its pseudoperoxidase activity.</text>
</comment>
<comment type="catalytic activity">
    <reaction evidence="2">
        <text>Fe(III)-heme b-[protein] + nitric oxide + H2O = Fe(II)-heme b-[protein] + nitrite + 2 H(+)</text>
        <dbReference type="Rhea" id="RHEA:77711"/>
        <dbReference type="Rhea" id="RHEA-COMP:18975"/>
        <dbReference type="Rhea" id="RHEA-COMP:18976"/>
        <dbReference type="ChEBI" id="CHEBI:15377"/>
        <dbReference type="ChEBI" id="CHEBI:15378"/>
        <dbReference type="ChEBI" id="CHEBI:16301"/>
        <dbReference type="ChEBI" id="CHEBI:16480"/>
        <dbReference type="ChEBI" id="CHEBI:55376"/>
        <dbReference type="ChEBI" id="CHEBI:60344"/>
    </reaction>
    <physiologicalReaction direction="right-to-left" evidence="2">
        <dbReference type="Rhea" id="RHEA:77713"/>
    </physiologicalReaction>
</comment>
<comment type="catalytic activity">
    <reaction evidence="2">
        <text>H2O2 + AH2 = A + 2 H2O</text>
        <dbReference type="Rhea" id="RHEA:30275"/>
        <dbReference type="ChEBI" id="CHEBI:13193"/>
        <dbReference type="ChEBI" id="CHEBI:15377"/>
        <dbReference type="ChEBI" id="CHEBI:16240"/>
        <dbReference type="ChEBI" id="CHEBI:17499"/>
    </reaction>
</comment>
<comment type="subunit">
    <text evidence="3">Monomeric.</text>
</comment>
<comment type="subcellular location">
    <subcellularLocation>
        <location evidence="2">Cytoplasm</location>
        <location evidence="2">Sarcoplasm</location>
    </subcellularLocation>
</comment>
<comment type="similarity">
    <text evidence="6">Belongs to the globin family.</text>
</comment>
<organism>
    <name type="scientific">Sarda chiliensis</name>
    <name type="common">Pacific bonito</name>
    <name type="synonym">Pelamys chiliensis</name>
    <dbReference type="NCBI Taxonomy" id="8231"/>
    <lineage>
        <taxon>Eukaryota</taxon>
        <taxon>Metazoa</taxon>
        <taxon>Chordata</taxon>
        <taxon>Craniata</taxon>
        <taxon>Vertebrata</taxon>
        <taxon>Euteleostomi</taxon>
        <taxon>Actinopterygii</taxon>
        <taxon>Neopterygii</taxon>
        <taxon>Teleostei</taxon>
        <taxon>Neoteleostei</taxon>
        <taxon>Acanthomorphata</taxon>
        <taxon>Pelagiaria</taxon>
        <taxon>Scombriformes</taxon>
        <taxon>Scombridae</taxon>
        <taxon>Sarda</taxon>
    </lineage>
</organism>
<gene>
    <name type="primary">mb</name>
</gene>
<sequence>MADFDAVLKFWGPVEADYTSHGGLVLTRLFKEHPETQKLFPKFTGIAQADMAGNAAISAHGATVLKKLGELLKAKGNHAAILKPMANSHATKHKIPINNFKLISEIIVKVMQEKAGMDAGGQQALRNVMAAVIADLEANYKELGFSG</sequence>
<feature type="initiator methionine" description="Removed" evidence="1">
    <location>
        <position position="1"/>
    </location>
</feature>
<feature type="chain" id="PRO_0000053371" description="Myoglobin">
    <location>
        <begin position="2"/>
        <end position="147"/>
    </location>
</feature>
<feature type="domain" description="Globin" evidence="6">
    <location>
        <begin position="2"/>
        <end position="141"/>
    </location>
</feature>
<feature type="binding site" evidence="5">
    <location>
        <position position="60"/>
    </location>
    <ligand>
        <name>nitrite</name>
        <dbReference type="ChEBI" id="CHEBI:16301"/>
    </ligand>
</feature>
<feature type="binding site" evidence="4 6">
    <location>
        <position position="60"/>
    </location>
    <ligand>
        <name>O2</name>
        <dbReference type="ChEBI" id="CHEBI:15379"/>
    </ligand>
</feature>
<feature type="binding site" description="proximal binding residue" evidence="2">
    <location>
        <position position="89"/>
    </location>
    <ligand>
        <name>heme b</name>
        <dbReference type="ChEBI" id="CHEBI:60344"/>
    </ligand>
    <ligandPart>
        <name>Fe</name>
        <dbReference type="ChEBI" id="CHEBI:18248"/>
    </ligandPart>
</feature>
<name>MYG_SARCH</name>
<reference key="1">
    <citation type="journal article" date="2001" name="Am. J. Physiol.">
        <title>Oxygen affinity and amino acid sequence of myoglobins from endothermic and ectothermic fish.</title>
        <authorList>
            <person name="Marcinek D.J."/>
            <person name="Bonaventura J."/>
            <person name="Wittenberg J.B."/>
            <person name="Block B.A."/>
        </authorList>
    </citation>
    <scope>NUCLEOTIDE SEQUENCE [MRNA]</scope>
    <source>
        <tissue>Skeletal muscle</tissue>
    </source>
</reference>